<organism>
    <name type="scientific">Pseudomonas aeruginosa (strain ATCC 15692 / DSM 22644 / CIP 104116 / JCM 14847 / LMG 12228 / 1C / PRS 101 / PAO1)</name>
    <dbReference type="NCBI Taxonomy" id="208964"/>
    <lineage>
        <taxon>Bacteria</taxon>
        <taxon>Pseudomonadati</taxon>
        <taxon>Pseudomonadota</taxon>
        <taxon>Gammaproteobacteria</taxon>
        <taxon>Pseudomonadales</taxon>
        <taxon>Pseudomonadaceae</taxon>
        <taxon>Pseudomonas</taxon>
    </lineage>
</organism>
<name>BAUR_PSEAE</name>
<proteinExistence type="inferred from homology"/>
<sequence length="305" mass="33425">MAKSRNPSLGQVSDFDIRLLRIFKTIVECGSFSAAESTLGLSRSAISLHMGDLEKRLGMRLCQRGRAGFALTDEGREVYRATQTLLAALEGFRAEVNDLHQHLRGELNIGIINNLVTLPQMRITHALSALKGQGPQVRINIGMTTPNEIELGVLDGHLHVGVVPLISPLSGLEYLPLYDEHAQLYCSRGHALFERADGDIAVDEVLAADAVAPSYRLPAEAQARHQELNNSASASDREGMAFLILTGNFIGYLPSHYAADWVAAGMLRPLLPERFHYAIALTIVTRKGRRPNLVLERFLEAVAVS</sequence>
<gene>
    <name type="primary">bauR</name>
    <name type="ordered locus">PA0133</name>
</gene>
<protein>
    <recommendedName>
        <fullName>HTH-type transcriptional activator BauR</fullName>
    </recommendedName>
</protein>
<feature type="chain" id="PRO_0000428949" description="HTH-type transcriptional activator BauR">
    <location>
        <begin position="1"/>
        <end position="305"/>
    </location>
</feature>
<feature type="domain" description="HTH lysR-type" evidence="1">
    <location>
        <begin position="15"/>
        <end position="72"/>
    </location>
</feature>
<keyword id="KW-0010">Activator</keyword>
<keyword id="KW-0238">DNA-binding</keyword>
<keyword id="KW-1185">Reference proteome</keyword>
<keyword id="KW-0804">Transcription</keyword>
<keyword id="KW-0805">Transcription regulation</keyword>
<dbReference type="EMBL" id="AE004091">
    <property type="protein sequence ID" value="AAG03523.1"/>
    <property type="molecule type" value="Genomic_DNA"/>
</dbReference>
<dbReference type="PIR" id="G83628">
    <property type="entry name" value="G83628"/>
</dbReference>
<dbReference type="RefSeq" id="NP_248823.1">
    <property type="nucleotide sequence ID" value="NC_002516.2"/>
</dbReference>
<dbReference type="RefSeq" id="WP_003083805.1">
    <property type="nucleotide sequence ID" value="NZ_QZGE01000015.1"/>
</dbReference>
<dbReference type="SMR" id="Q9I6Z9"/>
<dbReference type="STRING" id="208964.PA0133"/>
<dbReference type="PaxDb" id="208964-PA0133"/>
<dbReference type="GeneID" id="879432"/>
<dbReference type="KEGG" id="pae:PA0133"/>
<dbReference type="PATRIC" id="fig|208964.12.peg.138"/>
<dbReference type="PseudoCAP" id="PA0133"/>
<dbReference type="HOGENOM" id="CLU_039613_0_0_6"/>
<dbReference type="InParanoid" id="Q9I6Z9"/>
<dbReference type="OrthoDB" id="8587655at2"/>
<dbReference type="PhylomeDB" id="Q9I6Z9"/>
<dbReference type="BioCyc" id="PAER208964:G1FZ6-135-MONOMER"/>
<dbReference type="Proteomes" id="UP000002438">
    <property type="component" value="Chromosome"/>
</dbReference>
<dbReference type="GO" id="GO:0003700">
    <property type="term" value="F:DNA-binding transcription factor activity"/>
    <property type="evidence" value="ECO:0007669"/>
    <property type="project" value="InterPro"/>
</dbReference>
<dbReference type="GO" id="GO:0000976">
    <property type="term" value="F:transcription cis-regulatory region binding"/>
    <property type="evidence" value="ECO:0000318"/>
    <property type="project" value="GO_Central"/>
</dbReference>
<dbReference type="GO" id="GO:0009896">
    <property type="term" value="P:positive regulation of catabolic process"/>
    <property type="evidence" value="ECO:0000315"/>
    <property type="project" value="PseudoCAP"/>
</dbReference>
<dbReference type="GO" id="GO:0006355">
    <property type="term" value="P:regulation of DNA-templated transcription"/>
    <property type="evidence" value="ECO:0000318"/>
    <property type="project" value="GO_Central"/>
</dbReference>
<dbReference type="CDD" id="cd05466">
    <property type="entry name" value="PBP2_LTTR_substrate"/>
    <property type="match status" value="1"/>
</dbReference>
<dbReference type="FunFam" id="1.10.10.10:FF:000511">
    <property type="entry name" value="LysR family transcriptional regulator"/>
    <property type="match status" value="1"/>
</dbReference>
<dbReference type="Gene3D" id="3.40.190.290">
    <property type="match status" value="1"/>
</dbReference>
<dbReference type="Gene3D" id="1.10.10.10">
    <property type="entry name" value="Winged helix-like DNA-binding domain superfamily/Winged helix DNA-binding domain"/>
    <property type="match status" value="1"/>
</dbReference>
<dbReference type="InterPro" id="IPR005119">
    <property type="entry name" value="LysR_subst-bd"/>
</dbReference>
<dbReference type="InterPro" id="IPR000847">
    <property type="entry name" value="Tscrpt_reg_HTH_LysR"/>
</dbReference>
<dbReference type="InterPro" id="IPR036388">
    <property type="entry name" value="WH-like_DNA-bd_sf"/>
</dbReference>
<dbReference type="InterPro" id="IPR036390">
    <property type="entry name" value="WH_DNA-bd_sf"/>
</dbReference>
<dbReference type="PANTHER" id="PTHR30126:SF98">
    <property type="entry name" value="HTH-TYPE TRANSCRIPTIONAL ACTIVATOR BAUR"/>
    <property type="match status" value="1"/>
</dbReference>
<dbReference type="PANTHER" id="PTHR30126">
    <property type="entry name" value="HTH-TYPE TRANSCRIPTIONAL REGULATOR"/>
    <property type="match status" value="1"/>
</dbReference>
<dbReference type="Pfam" id="PF00126">
    <property type="entry name" value="HTH_1"/>
    <property type="match status" value="1"/>
</dbReference>
<dbReference type="Pfam" id="PF03466">
    <property type="entry name" value="LysR_substrate"/>
    <property type="match status" value="1"/>
</dbReference>
<dbReference type="SUPFAM" id="SSF53850">
    <property type="entry name" value="Periplasmic binding protein-like II"/>
    <property type="match status" value="1"/>
</dbReference>
<dbReference type="SUPFAM" id="SSF46785">
    <property type="entry name" value="Winged helix' DNA-binding domain"/>
    <property type="match status" value="1"/>
</dbReference>
<dbReference type="PROSITE" id="PS50931">
    <property type="entry name" value="HTH_LYSR"/>
    <property type="match status" value="1"/>
</dbReference>
<reference key="1">
    <citation type="journal article" date="2000" name="Nature">
        <title>Complete genome sequence of Pseudomonas aeruginosa PAO1, an opportunistic pathogen.</title>
        <authorList>
            <person name="Stover C.K."/>
            <person name="Pham X.-Q.T."/>
            <person name="Erwin A.L."/>
            <person name="Mizoguchi S.D."/>
            <person name="Warrener P."/>
            <person name="Hickey M.J."/>
            <person name="Brinkman F.S.L."/>
            <person name="Hufnagle W.O."/>
            <person name="Kowalik D.J."/>
            <person name="Lagrou M."/>
            <person name="Garber R.L."/>
            <person name="Goltry L."/>
            <person name="Tolentino E."/>
            <person name="Westbrock-Wadman S."/>
            <person name="Yuan Y."/>
            <person name="Brody L.L."/>
            <person name="Coulter S.N."/>
            <person name="Folger K.R."/>
            <person name="Kas A."/>
            <person name="Larbig K."/>
            <person name="Lim R.M."/>
            <person name="Smith K.A."/>
            <person name="Spencer D.H."/>
            <person name="Wong G.K.-S."/>
            <person name="Wu Z."/>
            <person name="Paulsen I.T."/>
            <person name="Reizer J."/>
            <person name="Saier M.H. Jr."/>
            <person name="Hancock R.E.W."/>
            <person name="Lory S."/>
            <person name="Olson M.V."/>
        </authorList>
    </citation>
    <scope>NUCLEOTIDE SEQUENCE [LARGE SCALE GENOMIC DNA]</scope>
    <source>
        <strain>ATCC 15692 / DSM 22644 / CIP 104116 / JCM 14847 / LMG 12228 / 1C / PRS 101 / PAO1</strain>
    </source>
</reference>
<reference key="2">
    <citation type="journal article" date="2011" name="J. Bacteriol.">
        <title>Functional characterization of seven gamma-glutamylpolyamine synthetase genes and the bauRABCD locus for polyamine and beta-alanine utilization in Pseudomonas aeruginosa PAO1.</title>
        <authorList>
            <person name="Yao X."/>
            <person name="He W."/>
            <person name="Lu C.D."/>
        </authorList>
    </citation>
    <scope>FUNCTION</scope>
    <scope>DISRUPTION PHENOTYPE</scope>
    <source>
        <strain>ATCC 15692 / DSM 22644 / CIP 104116 / JCM 14847 / LMG 12228 / 1C / PRS 101 / PAO1</strain>
    </source>
</reference>
<accession>Q9I6Z9</accession>
<comment type="function">
    <text evidence="2">Involved in the degradation of beta-alanine. BauR activates the transcription of the bauABCD operon.</text>
</comment>
<comment type="disruption phenotype">
    <text evidence="2">Cells lacking this gene grow normally on putrescine, cadaverine, and GABA, but growth on beta-alanine is completely abolished.</text>
</comment>
<comment type="similarity">
    <text evidence="3">Belongs to the LysR transcriptional regulatory family.</text>
</comment>
<evidence type="ECO:0000255" key="1">
    <source>
        <dbReference type="PROSITE-ProRule" id="PRU00253"/>
    </source>
</evidence>
<evidence type="ECO:0000269" key="2">
    <source>
    </source>
</evidence>
<evidence type="ECO:0000305" key="3"/>